<evidence type="ECO:0000255" key="1">
    <source>
        <dbReference type="HAMAP-Rule" id="MF_01690"/>
    </source>
</evidence>
<gene>
    <name evidence="1" type="primary">dapE</name>
    <name type="ordered locus">BMA10229_A3241</name>
</gene>
<keyword id="KW-0028">Amino-acid biosynthesis</keyword>
<keyword id="KW-0170">Cobalt</keyword>
<keyword id="KW-0220">Diaminopimelate biosynthesis</keyword>
<keyword id="KW-0378">Hydrolase</keyword>
<keyword id="KW-0457">Lysine biosynthesis</keyword>
<keyword id="KW-0479">Metal-binding</keyword>
<keyword id="KW-0862">Zinc</keyword>
<proteinExistence type="inferred from homology"/>
<name>DAPE_BURM9</name>
<dbReference type="EC" id="3.5.1.18" evidence="1"/>
<dbReference type="EMBL" id="CP000546">
    <property type="protein sequence ID" value="ABN02070.1"/>
    <property type="molecule type" value="Genomic_DNA"/>
</dbReference>
<dbReference type="RefSeq" id="WP_004191377.1">
    <property type="nucleotide sequence ID" value="NC_008836.1"/>
</dbReference>
<dbReference type="SMR" id="A2SB58"/>
<dbReference type="GeneID" id="92979293"/>
<dbReference type="KEGG" id="bml:BMA10229_A3241"/>
<dbReference type="HOGENOM" id="CLU_021802_4_0_4"/>
<dbReference type="UniPathway" id="UPA00034">
    <property type="reaction ID" value="UER00021"/>
</dbReference>
<dbReference type="Proteomes" id="UP000002283">
    <property type="component" value="Chromosome I"/>
</dbReference>
<dbReference type="GO" id="GO:0008777">
    <property type="term" value="F:acetylornithine deacetylase activity"/>
    <property type="evidence" value="ECO:0007669"/>
    <property type="project" value="TreeGrafter"/>
</dbReference>
<dbReference type="GO" id="GO:0050897">
    <property type="term" value="F:cobalt ion binding"/>
    <property type="evidence" value="ECO:0007669"/>
    <property type="project" value="UniProtKB-UniRule"/>
</dbReference>
<dbReference type="GO" id="GO:0009014">
    <property type="term" value="F:succinyl-diaminopimelate desuccinylase activity"/>
    <property type="evidence" value="ECO:0007669"/>
    <property type="project" value="UniProtKB-UniRule"/>
</dbReference>
<dbReference type="GO" id="GO:0008270">
    <property type="term" value="F:zinc ion binding"/>
    <property type="evidence" value="ECO:0007669"/>
    <property type="project" value="UniProtKB-UniRule"/>
</dbReference>
<dbReference type="GO" id="GO:0019877">
    <property type="term" value="P:diaminopimelate biosynthetic process"/>
    <property type="evidence" value="ECO:0007669"/>
    <property type="project" value="UniProtKB-UniRule"/>
</dbReference>
<dbReference type="GO" id="GO:0006526">
    <property type="term" value="P:L-arginine biosynthetic process"/>
    <property type="evidence" value="ECO:0007669"/>
    <property type="project" value="TreeGrafter"/>
</dbReference>
<dbReference type="GO" id="GO:0009089">
    <property type="term" value="P:lysine biosynthetic process via diaminopimelate"/>
    <property type="evidence" value="ECO:0007669"/>
    <property type="project" value="UniProtKB-UniRule"/>
</dbReference>
<dbReference type="CDD" id="cd03891">
    <property type="entry name" value="M20_DapE_proteobac"/>
    <property type="match status" value="1"/>
</dbReference>
<dbReference type="FunFam" id="3.30.70.360:FF:000011">
    <property type="entry name" value="Succinyl-diaminopimelate desuccinylase"/>
    <property type="match status" value="1"/>
</dbReference>
<dbReference type="FunFam" id="3.40.630.10:FF:000005">
    <property type="entry name" value="Succinyl-diaminopimelate desuccinylase"/>
    <property type="match status" value="1"/>
</dbReference>
<dbReference type="Gene3D" id="3.40.630.10">
    <property type="entry name" value="Zn peptidases"/>
    <property type="match status" value="2"/>
</dbReference>
<dbReference type="HAMAP" id="MF_01690">
    <property type="entry name" value="DapE"/>
    <property type="match status" value="1"/>
</dbReference>
<dbReference type="InterPro" id="IPR001261">
    <property type="entry name" value="ArgE/DapE_CS"/>
</dbReference>
<dbReference type="InterPro" id="IPR036264">
    <property type="entry name" value="Bact_exopeptidase_dim_dom"/>
</dbReference>
<dbReference type="InterPro" id="IPR005941">
    <property type="entry name" value="DapE_proteobac"/>
</dbReference>
<dbReference type="InterPro" id="IPR002933">
    <property type="entry name" value="Peptidase_M20"/>
</dbReference>
<dbReference type="InterPro" id="IPR011650">
    <property type="entry name" value="Peptidase_M20_dimer"/>
</dbReference>
<dbReference type="InterPro" id="IPR050072">
    <property type="entry name" value="Peptidase_M20A"/>
</dbReference>
<dbReference type="NCBIfam" id="TIGR01246">
    <property type="entry name" value="dapE_proteo"/>
    <property type="match status" value="1"/>
</dbReference>
<dbReference type="NCBIfam" id="NF009557">
    <property type="entry name" value="PRK13009.1"/>
    <property type="match status" value="1"/>
</dbReference>
<dbReference type="PANTHER" id="PTHR43808">
    <property type="entry name" value="ACETYLORNITHINE DEACETYLASE"/>
    <property type="match status" value="1"/>
</dbReference>
<dbReference type="PANTHER" id="PTHR43808:SF31">
    <property type="entry name" value="N-ACETYL-L-CITRULLINE DEACETYLASE"/>
    <property type="match status" value="1"/>
</dbReference>
<dbReference type="Pfam" id="PF07687">
    <property type="entry name" value="M20_dimer"/>
    <property type="match status" value="1"/>
</dbReference>
<dbReference type="Pfam" id="PF01546">
    <property type="entry name" value="Peptidase_M20"/>
    <property type="match status" value="1"/>
</dbReference>
<dbReference type="SUPFAM" id="SSF55031">
    <property type="entry name" value="Bacterial exopeptidase dimerisation domain"/>
    <property type="match status" value="1"/>
</dbReference>
<dbReference type="SUPFAM" id="SSF53187">
    <property type="entry name" value="Zn-dependent exopeptidases"/>
    <property type="match status" value="1"/>
</dbReference>
<dbReference type="PROSITE" id="PS00758">
    <property type="entry name" value="ARGE_DAPE_CPG2_1"/>
    <property type="match status" value="1"/>
</dbReference>
<feature type="chain" id="PRO_0000375502" description="Succinyl-diaminopimelate desuccinylase">
    <location>
        <begin position="1"/>
        <end position="379"/>
    </location>
</feature>
<feature type="active site" evidence="1">
    <location>
        <position position="72"/>
    </location>
</feature>
<feature type="active site" description="Proton acceptor" evidence="1">
    <location>
        <position position="137"/>
    </location>
</feature>
<feature type="binding site" evidence="1">
    <location>
        <position position="70"/>
    </location>
    <ligand>
        <name>Zn(2+)</name>
        <dbReference type="ChEBI" id="CHEBI:29105"/>
        <label>1</label>
    </ligand>
</feature>
<feature type="binding site" evidence="1">
    <location>
        <position position="103"/>
    </location>
    <ligand>
        <name>Zn(2+)</name>
        <dbReference type="ChEBI" id="CHEBI:29105"/>
        <label>1</label>
    </ligand>
</feature>
<feature type="binding site" evidence="1">
    <location>
        <position position="103"/>
    </location>
    <ligand>
        <name>Zn(2+)</name>
        <dbReference type="ChEBI" id="CHEBI:29105"/>
        <label>2</label>
    </ligand>
</feature>
<feature type="binding site" evidence="1">
    <location>
        <position position="138"/>
    </location>
    <ligand>
        <name>Zn(2+)</name>
        <dbReference type="ChEBI" id="CHEBI:29105"/>
        <label>2</label>
    </ligand>
</feature>
<feature type="binding site" evidence="1">
    <location>
        <position position="166"/>
    </location>
    <ligand>
        <name>Zn(2+)</name>
        <dbReference type="ChEBI" id="CHEBI:29105"/>
        <label>1</label>
    </ligand>
</feature>
<feature type="binding site" evidence="1">
    <location>
        <position position="352"/>
    </location>
    <ligand>
        <name>Zn(2+)</name>
        <dbReference type="ChEBI" id="CHEBI:29105"/>
        <label>2</label>
    </ligand>
</feature>
<comment type="function">
    <text evidence="1">Catalyzes the hydrolysis of N-succinyl-L,L-diaminopimelic acid (SDAP), forming succinate and LL-2,6-diaminopimelate (DAP), an intermediate involved in the bacterial biosynthesis of lysine and meso-diaminopimelic acid, an essential component of bacterial cell walls.</text>
</comment>
<comment type="catalytic activity">
    <reaction evidence="1">
        <text>N-succinyl-(2S,6S)-2,6-diaminopimelate + H2O = (2S,6S)-2,6-diaminopimelate + succinate</text>
        <dbReference type="Rhea" id="RHEA:22608"/>
        <dbReference type="ChEBI" id="CHEBI:15377"/>
        <dbReference type="ChEBI" id="CHEBI:30031"/>
        <dbReference type="ChEBI" id="CHEBI:57609"/>
        <dbReference type="ChEBI" id="CHEBI:58087"/>
        <dbReference type="EC" id="3.5.1.18"/>
    </reaction>
</comment>
<comment type="cofactor">
    <cofactor evidence="1">
        <name>Zn(2+)</name>
        <dbReference type="ChEBI" id="CHEBI:29105"/>
    </cofactor>
    <cofactor evidence="1">
        <name>Co(2+)</name>
        <dbReference type="ChEBI" id="CHEBI:48828"/>
    </cofactor>
    <text evidence="1">Binds 2 Zn(2+) or Co(2+) ions per subunit.</text>
</comment>
<comment type="pathway">
    <text evidence="1">Amino-acid biosynthesis; L-lysine biosynthesis via DAP pathway; LL-2,6-diaminopimelate from (S)-tetrahydrodipicolinate (succinylase route): step 3/3.</text>
</comment>
<comment type="subunit">
    <text evidence="1">Homodimer.</text>
</comment>
<comment type="similarity">
    <text evidence="1">Belongs to the peptidase M20A family. DapE subfamily.</text>
</comment>
<sequence>MSATLALTEQLIARASVTPDDQHCQQLMIERLAALGFECETIASHGVTNFWAVKRGTAGRAGKLLAFAGHTDVVPTGPLEQWRSPPFVPTHRDGKLYGRGAADMKTSLAGFVVAAEEFVAAHPQHRGSIGFLITSDEEGPATDGTVKVVEALAARGERLDYCIVGEPTSTATLGDVVKNGRRGSMSGELVVKGVQGHIAYPHLAKNPIHLLAPALAELAAEQWDEGNEYFPPTTWQVSNLRAGTGATNVIPGHADLLFNFRFSTASTVEGLQARVHAILDRHGLDYTLNWSVSGLPFLTPRGELSNALDAAIRAETGVSPELSTTGGTSDGRFIARICPQVIEFGPPNASIHKIDEHIDVRFVDPLKNVYRRVLEQLIA</sequence>
<reference key="1">
    <citation type="journal article" date="2010" name="Genome Biol. Evol.">
        <title>Continuing evolution of Burkholderia mallei through genome reduction and large-scale rearrangements.</title>
        <authorList>
            <person name="Losada L."/>
            <person name="Ronning C.M."/>
            <person name="DeShazer D."/>
            <person name="Woods D."/>
            <person name="Fedorova N."/>
            <person name="Kim H.S."/>
            <person name="Shabalina S.A."/>
            <person name="Pearson T.R."/>
            <person name="Brinkac L."/>
            <person name="Tan P."/>
            <person name="Nandi T."/>
            <person name="Crabtree J."/>
            <person name="Badger J."/>
            <person name="Beckstrom-Sternberg S."/>
            <person name="Saqib M."/>
            <person name="Schutzer S.E."/>
            <person name="Keim P."/>
            <person name="Nierman W.C."/>
        </authorList>
    </citation>
    <scope>NUCLEOTIDE SEQUENCE [LARGE SCALE GENOMIC DNA]</scope>
    <source>
        <strain>NCTC 10229</strain>
    </source>
</reference>
<organism>
    <name type="scientific">Burkholderia mallei (strain NCTC 10229)</name>
    <dbReference type="NCBI Taxonomy" id="412022"/>
    <lineage>
        <taxon>Bacteria</taxon>
        <taxon>Pseudomonadati</taxon>
        <taxon>Pseudomonadota</taxon>
        <taxon>Betaproteobacteria</taxon>
        <taxon>Burkholderiales</taxon>
        <taxon>Burkholderiaceae</taxon>
        <taxon>Burkholderia</taxon>
        <taxon>pseudomallei group</taxon>
    </lineage>
</organism>
<accession>A2SB58</accession>
<protein>
    <recommendedName>
        <fullName evidence="1">Succinyl-diaminopimelate desuccinylase</fullName>
        <shortName evidence="1">SDAP desuccinylase</shortName>
        <ecNumber evidence="1">3.5.1.18</ecNumber>
    </recommendedName>
    <alternativeName>
        <fullName evidence="1">N-succinyl-LL-2,6-diaminoheptanedioate amidohydrolase</fullName>
    </alternativeName>
</protein>